<dbReference type="EC" id="1.17.1.9" evidence="1 2 5"/>
<dbReference type="PIR" id="JU0334">
    <property type="entry name" value="JU0334"/>
</dbReference>
<dbReference type="PDB" id="2GO1">
    <property type="method" value="X-ray"/>
    <property type="resolution" value="2.10 A"/>
    <property type="chains" value="A=1-401"/>
</dbReference>
<dbReference type="PDB" id="2GUG">
    <property type="method" value="X-ray"/>
    <property type="resolution" value="2.28 A"/>
    <property type="chains" value="A/B/C/D=1-401"/>
</dbReference>
<dbReference type="PDB" id="2NAC">
    <property type="method" value="X-ray"/>
    <property type="resolution" value="1.80 A"/>
    <property type="chains" value="A/B=2-394"/>
</dbReference>
<dbReference type="PDB" id="2NAD">
    <property type="method" value="X-ray"/>
    <property type="resolution" value="2.05 A"/>
    <property type="chains" value="A/B=2-394"/>
</dbReference>
<dbReference type="PDB" id="6JUJ">
    <property type="method" value="X-ray"/>
    <property type="resolution" value="2.18 A"/>
    <property type="chains" value="A/B=1-401"/>
</dbReference>
<dbReference type="PDB" id="6JUK">
    <property type="method" value="X-ray"/>
    <property type="resolution" value="2.29 A"/>
    <property type="chains" value="A/B=1-401"/>
</dbReference>
<dbReference type="PDB" id="6JWG">
    <property type="method" value="X-ray"/>
    <property type="resolution" value="2.08 A"/>
    <property type="chains" value="A/B=1-401"/>
</dbReference>
<dbReference type="PDB" id="6JX1">
    <property type="method" value="X-ray"/>
    <property type="resolution" value="2.23 A"/>
    <property type="chains" value="A/B=1-401"/>
</dbReference>
<dbReference type="PDBsum" id="2GO1"/>
<dbReference type="PDBsum" id="2GUG"/>
<dbReference type="PDBsum" id="2NAC"/>
<dbReference type="PDBsum" id="2NAD"/>
<dbReference type="PDBsum" id="6JUJ"/>
<dbReference type="PDBsum" id="6JUK"/>
<dbReference type="PDBsum" id="6JWG"/>
<dbReference type="PDBsum" id="6JX1"/>
<dbReference type="SMR" id="P33160"/>
<dbReference type="BRENDA" id="1.17.1.9">
    <property type="organism ID" value="5085"/>
</dbReference>
<dbReference type="EvolutionaryTrace" id="P33160"/>
<dbReference type="GO" id="GO:0005737">
    <property type="term" value="C:cytoplasm"/>
    <property type="evidence" value="ECO:0007669"/>
    <property type="project" value="UniProtKB-SubCell"/>
</dbReference>
<dbReference type="GO" id="GO:0008863">
    <property type="term" value="F:formate dehydrogenase (NAD+) activity"/>
    <property type="evidence" value="ECO:0007669"/>
    <property type="project" value="UniProtKB-UniRule"/>
</dbReference>
<dbReference type="GO" id="GO:0051287">
    <property type="term" value="F:NAD binding"/>
    <property type="evidence" value="ECO:0007669"/>
    <property type="project" value="InterPro"/>
</dbReference>
<dbReference type="GO" id="GO:0016616">
    <property type="term" value="F:oxidoreductase activity, acting on the CH-OH group of donors, NAD or NADP as acceptor"/>
    <property type="evidence" value="ECO:0007669"/>
    <property type="project" value="InterPro"/>
</dbReference>
<dbReference type="GO" id="GO:0042183">
    <property type="term" value="P:formate catabolic process"/>
    <property type="evidence" value="ECO:0007669"/>
    <property type="project" value="UniProtKB-UniRule"/>
</dbReference>
<dbReference type="CDD" id="cd05302">
    <property type="entry name" value="FDH"/>
    <property type="match status" value="1"/>
</dbReference>
<dbReference type="FunFam" id="3.40.50.720:FF:000057">
    <property type="entry name" value="Formate dehydrogenase"/>
    <property type="match status" value="1"/>
</dbReference>
<dbReference type="Gene3D" id="3.40.50.720">
    <property type="entry name" value="NAD(P)-binding Rossmann-like Domain"/>
    <property type="match status" value="2"/>
</dbReference>
<dbReference type="HAMAP" id="MF_03210">
    <property type="entry name" value="Formate_dehydrogenase"/>
    <property type="match status" value="1"/>
</dbReference>
<dbReference type="InterPro" id="IPR006139">
    <property type="entry name" value="D-isomer_2_OHA_DH_cat_dom"/>
</dbReference>
<dbReference type="InterPro" id="IPR029753">
    <property type="entry name" value="D-isomer_DH_CS"/>
</dbReference>
<dbReference type="InterPro" id="IPR029752">
    <property type="entry name" value="D-isomer_DH_CS1"/>
</dbReference>
<dbReference type="InterPro" id="IPR006140">
    <property type="entry name" value="D-isomer_DH_NAD-bd"/>
</dbReference>
<dbReference type="InterPro" id="IPR033689">
    <property type="entry name" value="FDH_NAD-dep"/>
</dbReference>
<dbReference type="InterPro" id="IPR036291">
    <property type="entry name" value="NAD(P)-bd_dom_sf"/>
</dbReference>
<dbReference type="NCBIfam" id="NF005750">
    <property type="entry name" value="PRK07574.1"/>
    <property type="match status" value="1"/>
</dbReference>
<dbReference type="PANTHER" id="PTHR42938">
    <property type="entry name" value="FORMATE DEHYDROGENASE 1"/>
    <property type="match status" value="1"/>
</dbReference>
<dbReference type="PANTHER" id="PTHR42938:SF9">
    <property type="entry name" value="FORMATE DEHYDROGENASE 1"/>
    <property type="match status" value="1"/>
</dbReference>
<dbReference type="Pfam" id="PF00389">
    <property type="entry name" value="2-Hacid_dh"/>
    <property type="match status" value="1"/>
</dbReference>
<dbReference type="Pfam" id="PF02826">
    <property type="entry name" value="2-Hacid_dh_C"/>
    <property type="match status" value="1"/>
</dbReference>
<dbReference type="SUPFAM" id="SSF52283">
    <property type="entry name" value="Formate/glycerate dehydrogenase catalytic domain-like"/>
    <property type="match status" value="1"/>
</dbReference>
<dbReference type="SUPFAM" id="SSF51735">
    <property type="entry name" value="NAD(P)-binding Rossmann-fold domains"/>
    <property type="match status" value="1"/>
</dbReference>
<dbReference type="PROSITE" id="PS00065">
    <property type="entry name" value="D_2_HYDROXYACID_DH_1"/>
    <property type="match status" value="1"/>
</dbReference>
<dbReference type="PROSITE" id="PS00670">
    <property type="entry name" value="D_2_HYDROXYACID_DH_2"/>
    <property type="match status" value="1"/>
</dbReference>
<dbReference type="PROSITE" id="PS00671">
    <property type="entry name" value="D_2_HYDROXYACID_DH_3"/>
    <property type="match status" value="1"/>
</dbReference>
<protein>
    <recommendedName>
        <fullName evidence="1 9">Formate dehydrogenase</fullName>
        <shortName evidence="1">FDH</shortName>
        <ecNumber evidence="1 2 5">1.17.1.9</ecNumber>
    </recommendedName>
    <alternativeName>
        <fullName evidence="1 8">NAD-dependent formate dehydrogenase</fullName>
    </alternativeName>
</protein>
<evidence type="ECO:0000255" key="1">
    <source>
        <dbReference type="HAMAP-Rule" id="MF_03210"/>
    </source>
</evidence>
<evidence type="ECO:0000269" key="2">
    <source>
    </source>
</evidence>
<evidence type="ECO:0000269" key="3">
    <source>
    </source>
</evidence>
<evidence type="ECO:0000269" key="4">
    <source>
    </source>
</evidence>
<evidence type="ECO:0000269" key="5">
    <source>
    </source>
</evidence>
<evidence type="ECO:0000269" key="6">
    <source ref="7"/>
</evidence>
<evidence type="ECO:0000269" key="7">
    <source ref="8"/>
</evidence>
<evidence type="ECO:0000303" key="8">
    <source>
    </source>
</evidence>
<evidence type="ECO:0000303" key="9">
    <source>
    </source>
</evidence>
<evidence type="ECO:0000305" key="10"/>
<evidence type="ECO:0000305" key="11">
    <source>
    </source>
</evidence>
<evidence type="ECO:0007829" key="12">
    <source>
        <dbReference type="PDB" id="2GO1"/>
    </source>
</evidence>
<evidence type="ECO:0007829" key="13">
    <source>
        <dbReference type="PDB" id="2NAC"/>
    </source>
</evidence>
<evidence type="ECO:0007829" key="14">
    <source>
        <dbReference type="PDB" id="2NAD"/>
    </source>
</evidence>
<evidence type="ECO:0007829" key="15">
    <source>
        <dbReference type="PDB" id="6JWG"/>
    </source>
</evidence>
<evidence type="ECO:0007829" key="16">
    <source>
        <dbReference type="PDB" id="6JX1"/>
    </source>
</evidence>
<sequence length="401" mass="44136">MAKVLCVLYDDPVDGYPKTYARDDLPKIDHYPGGQTLPTPKAIDFTPGQLLGSVSGELGLRKYLESNGHTLVVTSDKDGPDSVFERELVDADVVISQPFWPAYLTPERIAKAKNLKLALTAGIGSDHVDLQSAIDRNVTVAEVTYCNSISVAEHVVMMILSLVRNYLPSHEWARKGGWNIADCVSHAYDLEAMHVGTVAAGRIGLAVLRRLAPFDVHLHYTDRHRLPESVEKELNLTWHATREDMYPVCDVVTLNCPLHPETEHMINDETLKLFKRGAYIVNTARGKLCDRDAVARALESGRLAGYAGDVWFPQPAPKDHPWRTMPYNGMTPHISGTTLTAQARYAAGTREILECFFEGRPIRDEYLIVQGGALAGTGAHSYSKGNATGGSEEAAKFKKAV</sequence>
<accession>P33160</accession>
<name>FDH_PSESR</name>
<proteinExistence type="evidence at protein level"/>
<feature type="initiator methionine" description="Removed" evidence="3">
    <location>
        <position position="1"/>
    </location>
</feature>
<feature type="chain" id="PRO_0000076027" description="Formate dehydrogenase">
    <location>
        <begin position="2"/>
        <end position="401"/>
    </location>
</feature>
<feature type="binding site" evidence="1 7">
    <location>
        <position position="123"/>
    </location>
    <ligand>
        <name>substrate</name>
    </ligand>
</feature>
<feature type="binding site" evidence="1 7">
    <location>
        <position position="147"/>
    </location>
    <ligand>
        <name>substrate</name>
    </ligand>
</feature>
<feature type="binding site" evidence="1 4">
    <location>
        <position position="148"/>
    </location>
    <ligand>
        <name>NAD(+)</name>
        <dbReference type="ChEBI" id="CHEBI:57540"/>
    </ligand>
</feature>
<feature type="binding site" evidence="1 4">
    <location>
        <begin position="202"/>
        <end position="203"/>
    </location>
    <ligand>
        <name>NAD(+)</name>
        <dbReference type="ChEBI" id="CHEBI:57540"/>
    </ligand>
</feature>
<feature type="binding site" evidence="1 4">
    <location>
        <position position="222"/>
    </location>
    <ligand>
        <name>NAD(+)</name>
        <dbReference type="ChEBI" id="CHEBI:57540"/>
    </ligand>
</feature>
<feature type="binding site" evidence="1 4">
    <location>
        <begin position="257"/>
        <end position="261"/>
    </location>
    <ligand>
        <name>NAD(+)</name>
        <dbReference type="ChEBI" id="CHEBI:57540"/>
    </ligand>
</feature>
<feature type="binding site" evidence="1 4">
    <location>
        <position position="283"/>
    </location>
    <ligand>
        <name>NAD(+)</name>
        <dbReference type="ChEBI" id="CHEBI:57540"/>
    </ligand>
</feature>
<feature type="binding site" evidence="1 4">
    <location>
        <position position="309"/>
    </location>
    <ligand>
        <name>NAD(+)</name>
        <dbReference type="ChEBI" id="CHEBI:57540"/>
    </ligand>
</feature>
<feature type="binding site" evidence="1 4">
    <location>
        <begin position="333"/>
        <end position="336"/>
    </location>
    <ligand>
        <name>NAD(+)</name>
        <dbReference type="ChEBI" id="CHEBI:57540"/>
    </ligand>
</feature>
<feature type="binding site" evidence="1 4">
    <location>
        <position position="381"/>
    </location>
    <ligand>
        <name>NAD(+)</name>
        <dbReference type="ChEBI" id="CHEBI:57540"/>
    </ligand>
</feature>
<feature type="site" description="Important for catalytic activity" evidence="1 11">
    <location>
        <position position="285"/>
    </location>
</feature>
<feature type="site" description="Important for catalytic activity" evidence="1 11">
    <location>
        <position position="333"/>
    </location>
</feature>
<feature type="mutagenesis site" description="High resistance to inactivation by Hg(2+), Increased stability at 25 degrees Celsius and decreased thermostability at 45 degrees Celsius." evidence="5">
    <original>C</original>
    <variation>S</variation>
    <variation>M</variation>
    <location>
        <position position="256"/>
    </location>
</feature>
<feature type="sequence conflict" description="In Ref. 1." evidence="10" ref="1">
    <original>D</original>
    <variation>S</variation>
    <location>
        <position position="78"/>
    </location>
</feature>
<feature type="sequence conflict" description="In Ref. 1." evidence="10" ref="1">
    <original>TV</original>
    <variation>VT</variation>
    <location>
        <begin position="139"/>
        <end position="140"/>
    </location>
</feature>
<feature type="sequence conflict" description="In Ref. 1." evidence="10" ref="1">
    <original>C</original>
    <variation>V</variation>
    <location>
        <position position="146"/>
    </location>
</feature>
<feature type="sequence conflict" description="In Ref. 1." evidence="10" ref="1">
    <original>VH</original>
    <variation>HV</variation>
    <location>
        <begin position="216"/>
        <end position="217"/>
    </location>
</feature>
<feature type="sequence conflict" description="In Ref. 1." evidence="10" ref="1">
    <original>N</original>
    <variation>D</variation>
    <location>
        <position position="328"/>
    </location>
</feature>
<feature type="strand" evidence="13">
    <location>
        <begin position="3"/>
        <end position="7"/>
    </location>
</feature>
<feature type="strand" evidence="12">
    <location>
        <begin position="21"/>
        <end position="23"/>
    </location>
</feature>
<feature type="turn" evidence="13">
    <location>
        <begin position="54"/>
        <end position="56"/>
    </location>
</feature>
<feature type="helix" evidence="13">
    <location>
        <begin position="57"/>
        <end position="59"/>
    </location>
</feature>
<feature type="helix" evidence="13">
    <location>
        <begin position="61"/>
        <end position="66"/>
    </location>
</feature>
<feature type="strand" evidence="13">
    <location>
        <begin position="70"/>
        <end position="75"/>
    </location>
</feature>
<feature type="helix" evidence="13">
    <location>
        <begin position="83"/>
        <end position="88"/>
    </location>
</feature>
<feature type="strand" evidence="13">
    <location>
        <begin position="92"/>
        <end position="97"/>
    </location>
</feature>
<feature type="helix" evidence="13">
    <location>
        <begin position="106"/>
        <end position="111"/>
    </location>
</feature>
<feature type="strand" evidence="13">
    <location>
        <begin position="117"/>
        <end position="123"/>
    </location>
</feature>
<feature type="helix" evidence="13">
    <location>
        <begin position="130"/>
        <end position="135"/>
    </location>
</feature>
<feature type="strand" evidence="13">
    <location>
        <begin position="139"/>
        <end position="142"/>
    </location>
</feature>
<feature type="turn" evidence="13">
    <location>
        <begin position="144"/>
        <end position="147"/>
    </location>
</feature>
<feature type="helix" evidence="13">
    <location>
        <begin position="148"/>
        <end position="163"/>
    </location>
</feature>
<feature type="helix" evidence="13">
    <location>
        <begin position="166"/>
        <end position="174"/>
    </location>
</feature>
<feature type="helix" evidence="13">
    <location>
        <begin position="180"/>
        <end position="184"/>
    </location>
</feature>
<feature type="strand" evidence="13">
    <location>
        <begin position="194"/>
        <end position="198"/>
    </location>
</feature>
<feature type="helix" evidence="13">
    <location>
        <begin position="202"/>
        <end position="211"/>
    </location>
</feature>
<feature type="helix" evidence="13">
    <location>
        <begin position="212"/>
        <end position="214"/>
    </location>
</feature>
<feature type="strand" evidence="13">
    <location>
        <begin position="217"/>
        <end position="221"/>
    </location>
</feature>
<feature type="helix" evidence="13">
    <location>
        <begin position="228"/>
        <end position="234"/>
    </location>
</feature>
<feature type="strand" evidence="15">
    <location>
        <begin position="237"/>
        <end position="241"/>
    </location>
</feature>
<feature type="helix" evidence="13">
    <location>
        <begin position="242"/>
        <end position="245"/>
    </location>
</feature>
<feature type="helix" evidence="13">
    <location>
        <begin position="246"/>
        <end position="248"/>
    </location>
</feature>
<feature type="strand" evidence="13">
    <location>
        <begin position="250"/>
        <end position="254"/>
    </location>
</feature>
<feature type="turn" evidence="13">
    <location>
        <begin position="260"/>
        <end position="264"/>
    </location>
</feature>
<feature type="strand" evidence="16">
    <location>
        <begin position="265"/>
        <end position="267"/>
    </location>
</feature>
<feature type="helix" evidence="13">
    <location>
        <begin position="268"/>
        <end position="271"/>
    </location>
</feature>
<feature type="strand" evidence="13">
    <location>
        <begin position="278"/>
        <end position="282"/>
    </location>
</feature>
<feature type="helix" evidence="13">
    <location>
        <begin position="286"/>
        <end position="288"/>
    </location>
</feature>
<feature type="helix" evidence="13">
    <location>
        <begin position="291"/>
        <end position="299"/>
    </location>
</feature>
<feature type="strand" evidence="13">
    <location>
        <begin position="302"/>
        <end position="309"/>
    </location>
</feature>
<feature type="strand" evidence="13">
    <location>
        <begin position="312"/>
        <end position="315"/>
    </location>
</feature>
<feature type="helix" evidence="13">
    <location>
        <begin position="321"/>
        <end position="323"/>
    </location>
</feature>
<feature type="helix" evidence="14">
    <location>
        <begin position="335"/>
        <end position="337"/>
    </location>
</feature>
<feature type="helix" evidence="13">
    <location>
        <begin position="339"/>
        <end position="358"/>
    </location>
</feature>
<feature type="helix" evidence="13">
    <location>
        <begin position="364"/>
        <end position="366"/>
    </location>
</feature>
<feature type="strand" evidence="13">
    <location>
        <begin position="367"/>
        <end position="370"/>
    </location>
</feature>
<feature type="strand" evidence="12">
    <location>
        <begin position="371"/>
        <end position="373"/>
    </location>
</feature>
<feature type="helix" evidence="14">
    <location>
        <begin position="377"/>
        <end position="381"/>
    </location>
</feature>
<organism>
    <name type="scientific">Pseudomonas sp. (strain 101)</name>
    <name type="common">Achromobacter parvulus T1</name>
    <dbReference type="NCBI Taxonomy" id="33067"/>
    <lineage>
        <taxon>Bacteria</taxon>
        <taxon>Pseudomonadati</taxon>
        <taxon>Pseudomonadota</taxon>
    </lineage>
</organism>
<keyword id="KW-0002">3D-structure</keyword>
<keyword id="KW-0963">Cytoplasm</keyword>
<keyword id="KW-0903">Direct protein sequencing</keyword>
<keyword id="KW-0520">NAD</keyword>
<keyword id="KW-0560">Oxidoreductase</keyword>
<comment type="function">
    <text evidence="1 5">Catalyzes the NAD(+)-dependent oxidation of formate to carbon dioxide. Formate oxidation is the final step in the methanol oxidation pathway in methylotrophic microorganisms. Has a role in the detoxification of exogenous formate in non-methylotrophic organisms.</text>
</comment>
<comment type="catalytic activity">
    <reaction evidence="1 2 5">
        <text>formate + NAD(+) = CO2 + NADH</text>
        <dbReference type="Rhea" id="RHEA:15985"/>
        <dbReference type="ChEBI" id="CHEBI:15740"/>
        <dbReference type="ChEBI" id="CHEBI:16526"/>
        <dbReference type="ChEBI" id="CHEBI:57540"/>
        <dbReference type="ChEBI" id="CHEBI:57945"/>
        <dbReference type="EC" id="1.17.1.9"/>
    </reaction>
</comment>
<comment type="biophysicochemical properties">
    <kinetics>
        <KM evidence="5">7.5 mM for formate</KM>
        <KM evidence="2">7 mM for formate</KM>
        <KM evidence="5">0.11 mM for NAD(+)</KM>
        <KM evidence="2">60 uM for NAD(+)</KM>
        <text evidence="2 5">kcat is 10 sec(-1) with formate as substrate.</text>
    </kinetics>
</comment>
<comment type="subunit">
    <text evidence="1 6">Homodimer.</text>
</comment>
<comment type="subcellular location">
    <subcellularLocation>
        <location evidence="1">Cytoplasm</location>
    </subcellularLocation>
</comment>
<comment type="similarity">
    <text evidence="1">Belongs to the D-isomer specific 2-hydroxyacid dehydrogenase family. FDH subfamily.</text>
</comment>
<reference key="1">
    <citation type="journal article" date="1991" name="Dokl. Akad. Nauk SSSR">
        <title>NAD-dependent formate dehydrogenase of methylotrophic bacteria Pseudomonas sp. 101: cloning, expression, and study of the genetic structure.</title>
        <authorList>
            <person name="Tishkov V.I."/>
            <person name="Galkin A.G."/>
            <person name="Egorov A.M."/>
        </authorList>
    </citation>
    <scope>NUCLEOTIDE SEQUENCE [GENOMIC DNA]</scope>
</reference>
<reference key="2">
    <citation type="journal article" date="1990" name="Bioorg. Khim.">
        <title>NAD-dependent formate dehydrogenase from methylotrophic bacteria Pseudomonas sp. 101. I. Amino acid sequence.</title>
        <authorList>
            <person name="Popov V.O."/>
            <person name="Shumilin I.A."/>
            <person name="Ustinnikova T.B."/>
            <person name="Lamzin V.S."/>
            <person name="Egorov T.A."/>
        </authorList>
    </citation>
    <scope>PROTEIN SEQUENCE OF 2-394</scope>
</reference>
<reference key="3">
    <citation type="journal article" date="1992" name="Eur. J. Biochem.">
        <title>Crystal structure of NAD-dependent formate dehydrogenase.</title>
        <authorList>
            <person name="Lamzin V.S."/>
            <person name="Aleshin A.E."/>
            <person name="Strokopytov B.V."/>
            <person name="Yukhnevich M.G."/>
            <person name="Popov V.O."/>
            <person name="Harutyunyan E.H."/>
            <person name="Wilson K.S."/>
        </authorList>
    </citation>
    <scope>X-RAY CRYSTALLOGRAPHY (3.0 ANGSTROMS)</scope>
</reference>
<reference key="4">
    <citation type="journal article" date="2002" name="Biochem. J.">
        <title>Engineering of coenzyme specificity of formate dehydrogenase from Saccharomyces cerevisiae.</title>
        <authorList>
            <person name="Serov A.E."/>
            <person name="Popova A.S."/>
            <person name="Fedorchuk V.V."/>
            <person name="Tishkov V.I."/>
        </authorList>
    </citation>
    <scope>CATALYTIC ACTIVITY</scope>
    <scope>BIOPHYSICOCHEMICAL PROPERTIES</scope>
</reference>
<reference key="5">
    <citation type="journal article" date="1993" name="Biochem. Biophys. Res. Commun.">
        <title>Catalytic properties and stability of a Pseudomonas sp.101 formate dehydrogenase mutants containing Cys-255-Ser and Cys-255-Met replacements.</title>
        <authorList>
            <person name="Tishkov V.I."/>
            <person name="Galkin A.G."/>
            <person name="Marchenko G.N."/>
            <person name="Egorova O.A."/>
            <person name="Sheluho D.V."/>
            <person name="Kulakova L.B."/>
            <person name="Dementieva L.A."/>
            <person name="Egorov A.M."/>
        </authorList>
    </citation>
    <scope>FUNCTION</scope>
    <scope>CATALYTIC ACTIVITY</scope>
    <scope>BIOPHYSICOCHEMICAL PROPERTIES</scope>
    <scope>MUTAGENESIS OF CYS-256</scope>
</reference>
<reference key="6">
    <citation type="journal article" date="1994" name="J. Mol. Biol.">
        <title>High resolution structures of holo and apo formate dehydrogenase.</title>
        <authorList>
            <person name="Lamzin V.S."/>
            <person name="Dauter Z."/>
            <person name="Popov V.O."/>
            <person name="Harutyunyan E.H."/>
            <person name="Wilson K.S."/>
        </authorList>
    </citation>
    <scope>X-RAY CRYSTALLOGRAPHY (1.80 ANGSTROMS) OF 2-394 IN COMPLEX WITH NAD</scope>
</reference>
<reference key="7">
    <citation type="journal article" date="2005" name="Crystallogr. Rep.">
        <title>Structure of a new crystal modification of the bacterial NAD-dependent formate dehydrogenase with a resolution of 2.1 A.</title>
        <authorList>
            <person name="Filippova E.V."/>
            <person name="Polyakov K.M."/>
            <person name="Tikhonova T.V."/>
            <person name="Stekhanova T.N."/>
            <person name="Boiko K.M."/>
            <person name="Popov V.O."/>
        </authorList>
    </citation>
    <scope>X-RAY CRYSTALLOGRAPHY (2.10 ANGSTROMS)</scope>
    <scope>SUBUNIT</scope>
</reference>
<reference key="8">
    <citation type="journal article" date="2006" name="Crystallogr. Rep.">
        <title>Crystal structure of the complex of NAD-dependent formate dehydrogenase from methylotrophic bacterium Pseudomonas sp.101 with formate.</title>
        <authorList>
            <person name="Filippova E.V."/>
            <person name="Polyakov K.M."/>
            <person name="Tikhonova T.V."/>
            <person name="Stekhanova T.N."/>
            <person name="Boiko K.M."/>
            <person name="Sadihov I.G."/>
            <person name="Tishkov V.I."/>
            <person name="Labrou N."/>
            <person name="Popov V.O."/>
        </authorList>
    </citation>
    <scope>X-RAY CRYSTALLOGRAPHY (2.28 ANGSTROMS) IN COMPLEX WITH NAD AND FORMATE</scope>
</reference>